<keyword id="KW-0687">Ribonucleoprotein</keyword>
<keyword id="KW-0689">Ribosomal protein</keyword>
<reference key="1">
    <citation type="submission" date="2007-04" db="EMBL/GenBank/DDBJ databases">
        <title>Genome sequence of the thermophilic hydrogen-producing bacterium Caldicellulosiruptor saccharolyticus DSM 8903.</title>
        <authorList>
            <person name="Copeland A."/>
            <person name="Lucas S."/>
            <person name="Lapidus A."/>
            <person name="Barry K."/>
            <person name="Detter J.C."/>
            <person name="Glavina del Rio T."/>
            <person name="Hammon N."/>
            <person name="Israni S."/>
            <person name="Dalin E."/>
            <person name="Tice H."/>
            <person name="Pitluck S."/>
            <person name="Kiss H."/>
            <person name="Brettin T."/>
            <person name="Bruce D."/>
            <person name="Han C."/>
            <person name="Schmutz J."/>
            <person name="Larimer F."/>
            <person name="Land M."/>
            <person name="Hauser L."/>
            <person name="Kyrpides N."/>
            <person name="Lykidis A."/>
            <person name="van de Werken H.J.G."/>
            <person name="Verhaart M.R.A."/>
            <person name="VanFossen A.L."/>
            <person name="Lewis D.L."/>
            <person name="Nichols J.D."/>
            <person name="Goorissen H.P."/>
            <person name="van Niel E.W.J."/>
            <person name="Stams F.J.M."/>
            <person name="Willquist K.U."/>
            <person name="Ward D.E."/>
            <person name="van der Oost J."/>
            <person name="Kelly R.M."/>
            <person name="Kengen S.M.W."/>
            <person name="Richardson P."/>
        </authorList>
    </citation>
    <scope>NUCLEOTIDE SEQUENCE [LARGE SCALE GENOMIC DNA]</scope>
    <source>
        <strain>ATCC 43494 / DSM 8903 / Tp8T 6331</strain>
    </source>
</reference>
<evidence type="ECO:0000250" key="1">
    <source>
        <dbReference type="UniProtKB" id="Q2FXT0"/>
    </source>
</evidence>
<evidence type="ECO:0000255" key="2">
    <source>
        <dbReference type="HAMAP-Rule" id="MF_00539"/>
    </source>
</evidence>
<evidence type="ECO:0000305" key="3"/>
<sequence length="99" mass="10859">MKLIFDIQLFAHKKAGGSTRNGRDSESKRLGVKRSDGQFVLAGNILVRQRGTKFHPGKNVGRGGDDTLFALVTGYVKFENKRGRKVVSVIPAEEMVAAQ</sequence>
<comment type="PTM">
    <text evidence="1">The N-terminus is cleaved by ribosomal processing cysteine protease Prp.</text>
</comment>
<comment type="similarity">
    <text evidence="2">Belongs to the bacterial ribosomal protein bL27 family.</text>
</comment>
<feature type="propeptide" id="PRO_0000459868" evidence="1">
    <location>
        <begin position="1"/>
        <end position="10"/>
    </location>
</feature>
<feature type="chain" id="PRO_1000128710" description="Large ribosomal subunit protein bL27">
    <location>
        <begin position="11"/>
        <end position="99"/>
    </location>
</feature>
<name>RL27_CALS8</name>
<accession>A4XJS7</accession>
<dbReference type="EMBL" id="CP000679">
    <property type="protein sequence ID" value="ABP67162.1"/>
    <property type="molecule type" value="Genomic_DNA"/>
</dbReference>
<dbReference type="RefSeq" id="WP_011917097.1">
    <property type="nucleotide sequence ID" value="NC_009437.1"/>
</dbReference>
<dbReference type="SMR" id="A4XJS7"/>
<dbReference type="STRING" id="351627.Csac_1570"/>
<dbReference type="KEGG" id="csc:Csac_1570"/>
<dbReference type="eggNOG" id="COG0211">
    <property type="taxonomic scope" value="Bacteria"/>
</dbReference>
<dbReference type="HOGENOM" id="CLU_095424_4_1_9"/>
<dbReference type="OrthoDB" id="9803474at2"/>
<dbReference type="Proteomes" id="UP000000256">
    <property type="component" value="Chromosome"/>
</dbReference>
<dbReference type="GO" id="GO:0022625">
    <property type="term" value="C:cytosolic large ribosomal subunit"/>
    <property type="evidence" value="ECO:0007669"/>
    <property type="project" value="TreeGrafter"/>
</dbReference>
<dbReference type="GO" id="GO:0003735">
    <property type="term" value="F:structural constituent of ribosome"/>
    <property type="evidence" value="ECO:0007669"/>
    <property type="project" value="InterPro"/>
</dbReference>
<dbReference type="GO" id="GO:0006412">
    <property type="term" value="P:translation"/>
    <property type="evidence" value="ECO:0007669"/>
    <property type="project" value="UniProtKB-UniRule"/>
</dbReference>
<dbReference type="FunFam" id="2.40.50.100:FF:000020">
    <property type="entry name" value="50S ribosomal protein L27"/>
    <property type="match status" value="1"/>
</dbReference>
<dbReference type="Gene3D" id="2.40.50.100">
    <property type="match status" value="1"/>
</dbReference>
<dbReference type="HAMAP" id="MF_00539">
    <property type="entry name" value="Ribosomal_bL27"/>
    <property type="match status" value="1"/>
</dbReference>
<dbReference type="InterPro" id="IPR001684">
    <property type="entry name" value="Ribosomal_bL27"/>
</dbReference>
<dbReference type="InterPro" id="IPR018261">
    <property type="entry name" value="Ribosomal_bL27_CS"/>
</dbReference>
<dbReference type="NCBIfam" id="TIGR00062">
    <property type="entry name" value="L27"/>
    <property type="match status" value="1"/>
</dbReference>
<dbReference type="PANTHER" id="PTHR15893:SF0">
    <property type="entry name" value="LARGE RIBOSOMAL SUBUNIT PROTEIN BL27M"/>
    <property type="match status" value="1"/>
</dbReference>
<dbReference type="PANTHER" id="PTHR15893">
    <property type="entry name" value="RIBOSOMAL PROTEIN L27"/>
    <property type="match status" value="1"/>
</dbReference>
<dbReference type="Pfam" id="PF01016">
    <property type="entry name" value="Ribosomal_L27"/>
    <property type="match status" value="1"/>
</dbReference>
<dbReference type="PRINTS" id="PR00063">
    <property type="entry name" value="RIBOSOMALL27"/>
</dbReference>
<dbReference type="SUPFAM" id="SSF110324">
    <property type="entry name" value="Ribosomal L27 protein-like"/>
    <property type="match status" value="1"/>
</dbReference>
<dbReference type="PROSITE" id="PS00831">
    <property type="entry name" value="RIBOSOMAL_L27"/>
    <property type="match status" value="1"/>
</dbReference>
<gene>
    <name evidence="2" type="primary">rpmA</name>
    <name type="ordered locus">Csac_1570</name>
</gene>
<protein>
    <recommendedName>
        <fullName evidence="2">Large ribosomal subunit protein bL27</fullName>
    </recommendedName>
    <alternativeName>
        <fullName evidence="3">50S ribosomal protein L27</fullName>
    </alternativeName>
</protein>
<proteinExistence type="inferred from homology"/>
<organism>
    <name type="scientific">Caldicellulosiruptor saccharolyticus (strain ATCC 43494 / DSM 8903 / Tp8T 6331)</name>
    <dbReference type="NCBI Taxonomy" id="351627"/>
    <lineage>
        <taxon>Bacteria</taxon>
        <taxon>Bacillati</taxon>
        <taxon>Bacillota</taxon>
        <taxon>Bacillota incertae sedis</taxon>
        <taxon>Caldicellulosiruptorales</taxon>
        <taxon>Caldicellulosiruptoraceae</taxon>
        <taxon>Caldicellulosiruptor</taxon>
    </lineage>
</organism>